<reference key="1">
    <citation type="journal article" date="2001" name="Nature">
        <title>Complete genome sequence of Salmonella enterica serovar Typhimurium LT2.</title>
        <authorList>
            <person name="McClelland M."/>
            <person name="Sanderson K.E."/>
            <person name="Spieth J."/>
            <person name="Clifton S.W."/>
            <person name="Latreille P."/>
            <person name="Courtney L."/>
            <person name="Porwollik S."/>
            <person name="Ali J."/>
            <person name="Dante M."/>
            <person name="Du F."/>
            <person name="Hou S."/>
            <person name="Layman D."/>
            <person name="Leonard S."/>
            <person name="Nguyen C."/>
            <person name="Scott K."/>
            <person name="Holmes A."/>
            <person name="Grewal N."/>
            <person name="Mulvaney E."/>
            <person name="Ryan E."/>
            <person name="Sun H."/>
            <person name="Florea L."/>
            <person name="Miller W."/>
            <person name="Stoneking T."/>
            <person name="Nhan M."/>
            <person name="Waterston R."/>
            <person name="Wilson R.K."/>
        </authorList>
    </citation>
    <scope>NUCLEOTIDE SEQUENCE [LARGE SCALE GENOMIC DNA]</scope>
    <source>
        <strain>LT2 / SGSC1412 / ATCC 700720</strain>
    </source>
</reference>
<comment type="function">
    <text evidence="1">Zinc phosphodiesterase, which has both exoribonuclease and endoribonuclease activities.</text>
</comment>
<comment type="cofactor">
    <cofactor evidence="1">
        <name>Zn(2+)</name>
        <dbReference type="ChEBI" id="CHEBI:29105"/>
    </cofactor>
    <text evidence="1">Binds 2 Zn(2+) ions.</text>
</comment>
<comment type="subunit">
    <text evidence="1">Homodimer.</text>
</comment>
<comment type="similarity">
    <text evidence="1">Belongs to the RNase Z family. RNase BN subfamily.</text>
</comment>
<protein>
    <recommendedName>
        <fullName evidence="1">Ribonuclease BN</fullName>
        <shortName evidence="1">RNase BN</shortName>
        <ecNumber evidence="1">3.1.-.-</ecNumber>
    </recommendedName>
    <alternativeName>
        <fullName evidence="1">Ribonuclease Z homolog</fullName>
        <shortName evidence="1">RNase Z homolog</shortName>
    </alternativeName>
</protein>
<evidence type="ECO:0000255" key="1">
    <source>
        <dbReference type="HAMAP-Rule" id="MF_01818"/>
    </source>
</evidence>
<name>RBN_SALTY</name>
<organism>
    <name type="scientific">Salmonella typhimurium (strain LT2 / SGSC1412 / ATCC 700720)</name>
    <dbReference type="NCBI Taxonomy" id="99287"/>
    <lineage>
        <taxon>Bacteria</taxon>
        <taxon>Pseudomonadati</taxon>
        <taxon>Pseudomonadota</taxon>
        <taxon>Gammaproteobacteria</taxon>
        <taxon>Enterobacterales</taxon>
        <taxon>Enterobacteriaceae</taxon>
        <taxon>Salmonella</taxon>
    </lineage>
</organism>
<proteinExistence type="inferred from homology"/>
<sequence length="305" mass="32877">MELIFLGTSAGVPTRSRNVTAILLHLQHPTQPGVWLFDCGEGTQHQMLNTAFHPGKLERIFISHLHGDHLFGLPGLLCSRSMAGNPHPLTVYGPQGVREFIATTLRLSGSWTDFPLQIEEISAGDILDDGLRKVTAFRLEHPLECYGYRVVEHDKPGALNARALKAAGVTPGPLFQALKAGKTVTLADGRQINGADYLAPAVAGKSVAIFGDTAPCEAALALAQGVDVMVHETTLDASMEEKANARGHSSTRQTATLAREAAVGRLIMTHISSRYDDKGCQRLLAECRAIFPATELAYDFSVFPV</sequence>
<accession>P60195</accession>
<accession>Q8XFF2</accession>
<gene>
    <name evidence="1" type="primary">rbn</name>
    <name type="synonym">elaC</name>
    <name type="synonym">rnz</name>
    <name type="ordered locus">STM2313</name>
</gene>
<dbReference type="EC" id="3.1.-.-" evidence="1"/>
<dbReference type="EMBL" id="AE006468">
    <property type="protein sequence ID" value="AAL21214.1"/>
    <property type="molecule type" value="Genomic_DNA"/>
</dbReference>
<dbReference type="RefSeq" id="NP_461255.1">
    <property type="nucleotide sequence ID" value="NC_003197.2"/>
</dbReference>
<dbReference type="RefSeq" id="WP_000419093.1">
    <property type="nucleotide sequence ID" value="NC_003197.2"/>
</dbReference>
<dbReference type="SMR" id="P60195"/>
<dbReference type="STRING" id="99287.STM2313"/>
<dbReference type="PaxDb" id="99287-STM2313"/>
<dbReference type="GeneID" id="1253835"/>
<dbReference type="KEGG" id="stm:STM2313"/>
<dbReference type="PATRIC" id="fig|99287.12.peg.2449"/>
<dbReference type="HOGENOM" id="CLU_031317_2_0_6"/>
<dbReference type="PhylomeDB" id="P60195"/>
<dbReference type="BioCyc" id="SENT99287:STM2313-MONOMER"/>
<dbReference type="Proteomes" id="UP000001014">
    <property type="component" value="Chromosome"/>
</dbReference>
<dbReference type="GO" id="GO:0042781">
    <property type="term" value="F:3'-tRNA processing endoribonuclease activity"/>
    <property type="evidence" value="ECO:0000318"/>
    <property type="project" value="GO_Central"/>
</dbReference>
<dbReference type="GO" id="GO:0004527">
    <property type="term" value="F:exonuclease activity"/>
    <property type="evidence" value="ECO:0007669"/>
    <property type="project" value="UniProtKB-UniRule"/>
</dbReference>
<dbReference type="GO" id="GO:0008270">
    <property type="term" value="F:zinc ion binding"/>
    <property type="evidence" value="ECO:0007669"/>
    <property type="project" value="UniProtKB-UniRule"/>
</dbReference>
<dbReference type="CDD" id="cd07717">
    <property type="entry name" value="RNaseZ_ZiPD-like_MBL-fold"/>
    <property type="match status" value="1"/>
</dbReference>
<dbReference type="FunFam" id="3.60.15.10:FF:000002">
    <property type="entry name" value="Ribonuclease Z"/>
    <property type="match status" value="1"/>
</dbReference>
<dbReference type="Gene3D" id="3.60.15.10">
    <property type="entry name" value="Ribonuclease Z/Hydroxyacylglutathione hydrolase-like"/>
    <property type="match status" value="1"/>
</dbReference>
<dbReference type="HAMAP" id="MF_01818">
    <property type="entry name" value="RNase_Z_BN"/>
    <property type="match status" value="1"/>
</dbReference>
<dbReference type="InterPro" id="IPR001279">
    <property type="entry name" value="Metallo-B-lactamas"/>
</dbReference>
<dbReference type="InterPro" id="IPR036866">
    <property type="entry name" value="RibonucZ/Hydroxyglut_hydro"/>
</dbReference>
<dbReference type="InterPro" id="IPR013469">
    <property type="entry name" value="Rnase_BN"/>
</dbReference>
<dbReference type="InterPro" id="IPR013471">
    <property type="entry name" value="RNase_Z/BN"/>
</dbReference>
<dbReference type="NCBIfam" id="NF000800">
    <property type="entry name" value="PRK00055.1-1"/>
    <property type="match status" value="1"/>
</dbReference>
<dbReference type="NCBIfam" id="NF000801">
    <property type="entry name" value="PRK00055.1-3"/>
    <property type="match status" value="1"/>
</dbReference>
<dbReference type="NCBIfam" id="TIGR02651">
    <property type="entry name" value="RNase_Z"/>
    <property type="match status" value="1"/>
</dbReference>
<dbReference type="NCBIfam" id="TIGR02649">
    <property type="entry name" value="true_RNase_BN"/>
    <property type="match status" value="1"/>
</dbReference>
<dbReference type="PANTHER" id="PTHR46018">
    <property type="entry name" value="ZINC PHOSPHODIESTERASE ELAC PROTEIN 1"/>
    <property type="match status" value="1"/>
</dbReference>
<dbReference type="PANTHER" id="PTHR46018:SF2">
    <property type="entry name" value="ZINC PHOSPHODIESTERASE ELAC PROTEIN 1"/>
    <property type="match status" value="1"/>
</dbReference>
<dbReference type="Pfam" id="PF12706">
    <property type="entry name" value="Lactamase_B_2"/>
    <property type="match status" value="2"/>
</dbReference>
<dbReference type="SUPFAM" id="SSF56281">
    <property type="entry name" value="Metallo-hydrolase/oxidoreductase"/>
    <property type="match status" value="1"/>
</dbReference>
<keyword id="KW-0255">Endonuclease</keyword>
<keyword id="KW-0269">Exonuclease</keyword>
<keyword id="KW-0378">Hydrolase</keyword>
<keyword id="KW-0479">Metal-binding</keyword>
<keyword id="KW-0540">Nuclease</keyword>
<keyword id="KW-1185">Reference proteome</keyword>
<keyword id="KW-0819">tRNA processing</keyword>
<keyword id="KW-0862">Zinc</keyword>
<feature type="chain" id="PRO_0000155891" description="Ribonuclease BN">
    <location>
        <begin position="1"/>
        <end position="305"/>
    </location>
</feature>
<feature type="active site" description="Proton acceptor" evidence="1">
    <location>
        <position position="68"/>
    </location>
</feature>
<feature type="binding site" evidence="1">
    <location>
        <position position="64"/>
    </location>
    <ligand>
        <name>Zn(2+)</name>
        <dbReference type="ChEBI" id="CHEBI:29105"/>
        <label>1</label>
        <note>catalytic</note>
    </ligand>
</feature>
<feature type="binding site" evidence="1">
    <location>
        <position position="66"/>
    </location>
    <ligand>
        <name>Zn(2+)</name>
        <dbReference type="ChEBI" id="CHEBI:29105"/>
        <label>1</label>
        <note>catalytic</note>
    </ligand>
</feature>
<feature type="binding site" evidence="1">
    <location>
        <position position="68"/>
    </location>
    <ligand>
        <name>Zn(2+)</name>
        <dbReference type="ChEBI" id="CHEBI:29105"/>
        <label>2</label>
        <note>catalytic</note>
    </ligand>
</feature>
<feature type="binding site" evidence="1">
    <location>
        <position position="69"/>
    </location>
    <ligand>
        <name>Zn(2+)</name>
        <dbReference type="ChEBI" id="CHEBI:29105"/>
        <label>2</label>
        <note>catalytic</note>
    </ligand>
</feature>
<feature type="binding site" evidence="1">
    <location>
        <position position="141"/>
    </location>
    <ligand>
        <name>Zn(2+)</name>
        <dbReference type="ChEBI" id="CHEBI:29105"/>
        <label>1</label>
        <note>catalytic</note>
    </ligand>
</feature>
<feature type="binding site" evidence="1">
    <location>
        <position position="212"/>
    </location>
    <ligand>
        <name>Zn(2+)</name>
        <dbReference type="ChEBI" id="CHEBI:29105"/>
        <label>1</label>
        <note>catalytic</note>
    </ligand>
</feature>
<feature type="binding site" evidence="1">
    <location>
        <position position="212"/>
    </location>
    <ligand>
        <name>Zn(2+)</name>
        <dbReference type="ChEBI" id="CHEBI:29105"/>
        <label>2</label>
        <note>catalytic</note>
    </ligand>
</feature>
<feature type="binding site" evidence="1">
    <location>
        <position position="270"/>
    </location>
    <ligand>
        <name>Zn(2+)</name>
        <dbReference type="ChEBI" id="CHEBI:29105"/>
        <label>2</label>
        <note>catalytic</note>
    </ligand>
</feature>